<name>UPPP_PSEPW</name>
<comment type="function">
    <text evidence="1">Catalyzes the dephosphorylation of undecaprenyl diphosphate (UPP). Confers resistance to bacitracin.</text>
</comment>
<comment type="catalytic activity">
    <reaction evidence="1">
        <text>di-trans,octa-cis-undecaprenyl diphosphate + H2O = di-trans,octa-cis-undecaprenyl phosphate + phosphate + H(+)</text>
        <dbReference type="Rhea" id="RHEA:28094"/>
        <dbReference type="ChEBI" id="CHEBI:15377"/>
        <dbReference type="ChEBI" id="CHEBI:15378"/>
        <dbReference type="ChEBI" id="CHEBI:43474"/>
        <dbReference type="ChEBI" id="CHEBI:58405"/>
        <dbReference type="ChEBI" id="CHEBI:60392"/>
        <dbReference type="EC" id="3.6.1.27"/>
    </reaction>
</comment>
<comment type="subcellular location">
    <subcellularLocation>
        <location evidence="1">Cell inner membrane</location>
        <topology evidence="1">Multi-pass membrane protein</topology>
    </subcellularLocation>
</comment>
<comment type="miscellaneous">
    <text>Bacitracin is thought to be involved in the inhibition of peptidoglycan synthesis by sequestering undecaprenyl diphosphate, thereby reducing the pool of lipid carrier available.</text>
</comment>
<comment type="similarity">
    <text evidence="1">Belongs to the UppP family.</text>
</comment>
<dbReference type="EC" id="3.6.1.27" evidence="1"/>
<dbReference type="EMBL" id="CP000949">
    <property type="protein sequence ID" value="ACA73248.1"/>
    <property type="molecule type" value="Genomic_DNA"/>
</dbReference>
<dbReference type="SMR" id="B1J8R9"/>
<dbReference type="STRING" id="390235.PputW619_2756"/>
<dbReference type="KEGG" id="ppw:PputW619_2756"/>
<dbReference type="eggNOG" id="COG1968">
    <property type="taxonomic scope" value="Bacteria"/>
</dbReference>
<dbReference type="HOGENOM" id="CLU_060296_2_0_6"/>
<dbReference type="OrthoDB" id="9808289at2"/>
<dbReference type="GO" id="GO:0005886">
    <property type="term" value="C:plasma membrane"/>
    <property type="evidence" value="ECO:0007669"/>
    <property type="project" value="UniProtKB-SubCell"/>
</dbReference>
<dbReference type="GO" id="GO:0050380">
    <property type="term" value="F:undecaprenyl-diphosphatase activity"/>
    <property type="evidence" value="ECO:0007669"/>
    <property type="project" value="UniProtKB-UniRule"/>
</dbReference>
<dbReference type="GO" id="GO:0071555">
    <property type="term" value="P:cell wall organization"/>
    <property type="evidence" value="ECO:0007669"/>
    <property type="project" value="UniProtKB-KW"/>
</dbReference>
<dbReference type="GO" id="GO:0009252">
    <property type="term" value="P:peptidoglycan biosynthetic process"/>
    <property type="evidence" value="ECO:0007669"/>
    <property type="project" value="UniProtKB-KW"/>
</dbReference>
<dbReference type="GO" id="GO:0008360">
    <property type="term" value="P:regulation of cell shape"/>
    <property type="evidence" value="ECO:0007669"/>
    <property type="project" value="UniProtKB-KW"/>
</dbReference>
<dbReference type="GO" id="GO:0046677">
    <property type="term" value="P:response to antibiotic"/>
    <property type="evidence" value="ECO:0007669"/>
    <property type="project" value="UniProtKB-UniRule"/>
</dbReference>
<dbReference type="HAMAP" id="MF_01006">
    <property type="entry name" value="Undec_diphosphatase"/>
    <property type="match status" value="1"/>
</dbReference>
<dbReference type="InterPro" id="IPR003824">
    <property type="entry name" value="UppP"/>
</dbReference>
<dbReference type="NCBIfam" id="NF001389">
    <property type="entry name" value="PRK00281.1-2"/>
    <property type="match status" value="1"/>
</dbReference>
<dbReference type="NCBIfam" id="NF001390">
    <property type="entry name" value="PRK00281.1-4"/>
    <property type="match status" value="1"/>
</dbReference>
<dbReference type="NCBIfam" id="TIGR00753">
    <property type="entry name" value="undec_PP_bacA"/>
    <property type="match status" value="1"/>
</dbReference>
<dbReference type="PANTHER" id="PTHR30622">
    <property type="entry name" value="UNDECAPRENYL-DIPHOSPHATASE"/>
    <property type="match status" value="1"/>
</dbReference>
<dbReference type="PANTHER" id="PTHR30622:SF3">
    <property type="entry name" value="UNDECAPRENYL-DIPHOSPHATASE"/>
    <property type="match status" value="1"/>
</dbReference>
<dbReference type="Pfam" id="PF02673">
    <property type="entry name" value="BacA"/>
    <property type="match status" value="1"/>
</dbReference>
<evidence type="ECO:0000255" key="1">
    <source>
        <dbReference type="HAMAP-Rule" id="MF_01006"/>
    </source>
</evidence>
<keyword id="KW-0046">Antibiotic resistance</keyword>
<keyword id="KW-0997">Cell inner membrane</keyword>
<keyword id="KW-1003">Cell membrane</keyword>
<keyword id="KW-0133">Cell shape</keyword>
<keyword id="KW-0961">Cell wall biogenesis/degradation</keyword>
<keyword id="KW-0378">Hydrolase</keyword>
<keyword id="KW-0472">Membrane</keyword>
<keyword id="KW-0573">Peptidoglycan synthesis</keyword>
<keyword id="KW-0812">Transmembrane</keyword>
<keyword id="KW-1133">Transmembrane helix</keyword>
<proteinExistence type="inferred from homology"/>
<protein>
    <recommendedName>
        <fullName evidence="1">Undecaprenyl-diphosphatase</fullName>
        <ecNumber evidence="1">3.6.1.27</ecNumber>
    </recommendedName>
    <alternativeName>
        <fullName evidence="1">Bacitracin resistance protein</fullName>
    </alternativeName>
    <alternativeName>
        <fullName evidence="1">Undecaprenyl pyrophosphate phosphatase</fullName>
    </alternativeName>
</protein>
<feature type="chain" id="PRO_1000197392" description="Undecaprenyl-diphosphatase">
    <location>
        <begin position="1"/>
        <end position="276"/>
    </location>
</feature>
<feature type="transmembrane region" description="Helical" evidence="1">
    <location>
        <begin position="43"/>
        <end position="63"/>
    </location>
</feature>
<feature type="transmembrane region" description="Helical" evidence="1">
    <location>
        <begin position="85"/>
        <end position="105"/>
    </location>
</feature>
<feature type="transmembrane region" description="Helical" evidence="1">
    <location>
        <begin position="109"/>
        <end position="129"/>
    </location>
</feature>
<feature type="transmembrane region" description="Helical" evidence="1">
    <location>
        <begin position="183"/>
        <end position="203"/>
    </location>
</feature>
<feature type="transmembrane region" description="Helical" evidence="1">
    <location>
        <begin position="214"/>
        <end position="234"/>
    </location>
</feature>
<feature type="transmembrane region" description="Helical" evidence="1">
    <location>
        <begin position="249"/>
        <end position="269"/>
    </location>
</feature>
<sequence>MDFWTAFQAIILGVVEGLTEFLPISSTGHQIIVADLIGFGGERAMAFNIIIQLAAILAVVWEFRRKILDVVFGLKSQPAARRFTANLLLAFMPAVVLGVLFADLIHEYLFNPITVATALVIGGVIMLWAERRTHSVAVDHVDDMRWSHALKIGFVQCLAMIPGTSRSGSTIIGGLLFGLSRKAATEFSFFLAMPTMVGAAVYSGYKYRDLFQPSDLPVFAIGFVTSFIFAMIAVRGLLKFIANHSYAAFAWYRIAFGLLILATWQFGWVDWSTAHG</sequence>
<accession>B1J8R9</accession>
<gene>
    <name evidence="1" type="primary">uppP</name>
    <name type="ordered locus">PputW619_2756</name>
</gene>
<reference key="1">
    <citation type="submission" date="2008-02" db="EMBL/GenBank/DDBJ databases">
        <title>Complete sequence of Pseudomonas putida W619.</title>
        <authorList>
            <person name="Copeland A."/>
            <person name="Lucas S."/>
            <person name="Lapidus A."/>
            <person name="Barry K."/>
            <person name="Detter J.C."/>
            <person name="Glavina del Rio T."/>
            <person name="Dalin E."/>
            <person name="Tice H."/>
            <person name="Pitluck S."/>
            <person name="Chain P."/>
            <person name="Malfatti S."/>
            <person name="Shin M."/>
            <person name="Vergez L."/>
            <person name="Schmutz J."/>
            <person name="Larimer F."/>
            <person name="Land M."/>
            <person name="Hauser L."/>
            <person name="Kyrpides N."/>
            <person name="Kim E."/>
            <person name="Taghavi S."/>
            <person name="Vangronsveld D."/>
            <person name="van der Lelie D."/>
            <person name="Richardson P."/>
        </authorList>
    </citation>
    <scope>NUCLEOTIDE SEQUENCE [LARGE SCALE GENOMIC DNA]</scope>
    <source>
        <strain>W619</strain>
    </source>
</reference>
<organism>
    <name type="scientific">Pseudomonas putida (strain W619)</name>
    <dbReference type="NCBI Taxonomy" id="390235"/>
    <lineage>
        <taxon>Bacteria</taxon>
        <taxon>Pseudomonadati</taxon>
        <taxon>Pseudomonadota</taxon>
        <taxon>Gammaproteobacteria</taxon>
        <taxon>Pseudomonadales</taxon>
        <taxon>Pseudomonadaceae</taxon>
        <taxon>Pseudomonas</taxon>
    </lineage>
</organism>